<reference key="1">
    <citation type="journal article" date="1997" name="Nature">
        <title>The complete genome sequence of the hyperthermophilic, sulphate-reducing archaeon Archaeoglobus fulgidus.</title>
        <authorList>
            <person name="Klenk H.-P."/>
            <person name="Clayton R.A."/>
            <person name="Tomb J.-F."/>
            <person name="White O."/>
            <person name="Nelson K.E."/>
            <person name="Ketchum K.A."/>
            <person name="Dodson R.J."/>
            <person name="Gwinn M.L."/>
            <person name="Hickey E.K."/>
            <person name="Peterson J.D."/>
            <person name="Richardson D.L."/>
            <person name="Kerlavage A.R."/>
            <person name="Graham D.E."/>
            <person name="Kyrpides N.C."/>
            <person name="Fleischmann R.D."/>
            <person name="Quackenbush J."/>
            <person name="Lee N.H."/>
            <person name="Sutton G.G."/>
            <person name="Gill S.R."/>
            <person name="Kirkness E.F."/>
            <person name="Dougherty B.A."/>
            <person name="McKenney K."/>
            <person name="Adams M.D."/>
            <person name="Loftus B.J."/>
            <person name="Peterson S.N."/>
            <person name="Reich C.I."/>
            <person name="McNeil L.K."/>
            <person name="Badger J.H."/>
            <person name="Glodek A."/>
            <person name="Zhou L."/>
            <person name="Overbeek R."/>
            <person name="Gocayne J.D."/>
            <person name="Weidman J.F."/>
            <person name="McDonald L.A."/>
            <person name="Utterback T.R."/>
            <person name="Cotton M.D."/>
            <person name="Spriggs T."/>
            <person name="Artiach P."/>
            <person name="Kaine B.P."/>
            <person name="Sykes S.M."/>
            <person name="Sadow P.W."/>
            <person name="D'Andrea K.P."/>
            <person name="Bowman C."/>
            <person name="Fujii C."/>
            <person name="Garland S.A."/>
            <person name="Mason T.M."/>
            <person name="Olsen G.J."/>
            <person name="Fraser C.M."/>
            <person name="Smith H.O."/>
            <person name="Woese C.R."/>
            <person name="Venter J.C."/>
        </authorList>
    </citation>
    <scope>NUCLEOTIDE SEQUENCE [LARGE SCALE GENOMIC DNA]</scope>
    <source>
        <strain>ATCC 49558 / DSM 4304 / JCM 9628 / NBRC 100126 / VC-16</strain>
    </source>
</reference>
<sequence length="92" mass="10772">MEKLAAKVLENFDFLKKLLRDRAECGESEITIYDDPVTIVVKRDRIDFFINEEYHGSVGVGFNTLSDEIREEARLWLEGLAGMKFKRYAVRR</sequence>
<organism>
    <name type="scientific">Archaeoglobus fulgidus (strain ATCC 49558 / DSM 4304 / JCM 9628 / NBRC 100126 / VC-16)</name>
    <dbReference type="NCBI Taxonomy" id="224325"/>
    <lineage>
        <taxon>Archaea</taxon>
        <taxon>Methanobacteriati</taxon>
        <taxon>Methanobacteriota</taxon>
        <taxon>Archaeoglobi</taxon>
        <taxon>Archaeoglobales</taxon>
        <taxon>Archaeoglobaceae</taxon>
        <taxon>Archaeoglobus</taxon>
    </lineage>
</organism>
<dbReference type="EMBL" id="AE000782">
    <property type="protein sequence ID" value="AAB89616.1"/>
    <property type="molecule type" value="Genomic_DNA"/>
</dbReference>
<dbReference type="PIR" id="C69454">
    <property type="entry name" value="C69454"/>
</dbReference>
<dbReference type="RefSeq" id="WP_010879132.1">
    <property type="nucleotide sequence ID" value="NC_000917.1"/>
</dbReference>
<dbReference type="STRING" id="224325.AF_1636"/>
<dbReference type="PaxDb" id="224325-AF_1636"/>
<dbReference type="DNASU" id="1484859"/>
<dbReference type="EnsemblBacteria" id="AAB89616">
    <property type="protein sequence ID" value="AAB89616"/>
    <property type="gene ID" value="AF_1636"/>
</dbReference>
<dbReference type="KEGG" id="afu:AF_1636"/>
<dbReference type="eggNOG" id="arCOG10229">
    <property type="taxonomic scope" value="Archaea"/>
</dbReference>
<dbReference type="HOGENOM" id="CLU_2406180_0_0_2"/>
<dbReference type="Proteomes" id="UP000002199">
    <property type="component" value="Chromosome"/>
</dbReference>
<protein>
    <recommendedName>
        <fullName>Uncharacterized protein AF_1636</fullName>
    </recommendedName>
</protein>
<proteinExistence type="predicted"/>
<gene>
    <name type="ordered locus">AF_1636</name>
</gene>
<name>Y1636_ARCFU</name>
<feature type="chain" id="PRO_0000128042" description="Uncharacterized protein AF_1636">
    <location>
        <begin position="1"/>
        <end position="92"/>
    </location>
</feature>
<accession>O28637</accession>
<keyword id="KW-1185">Reference proteome</keyword>